<keyword id="KW-0539">Nucleus</keyword>
<keyword id="KW-0597">Phosphoprotein</keyword>
<keyword id="KW-1185">Reference proteome</keyword>
<keyword id="KW-0804">Transcription</keyword>
<keyword id="KW-0805">Transcription regulation</keyword>
<protein>
    <recommendedName>
        <fullName>RNA polymerase I-specific transcription initiation factor RRN3</fullName>
    </recommendedName>
</protein>
<dbReference type="EMBL" id="BC055781">
    <property type="protein sequence ID" value="AAH55781.1"/>
    <property type="molecule type" value="mRNA"/>
</dbReference>
<dbReference type="EMBL" id="BC034110">
    <property type="protein sequence ID" value="AAH34110.1"/>
    <property type="molecule type" value="mRNA"/>
</dbReference>
<dbReference type="EMBL" id="BC138774">
    <property type="protein sequence ID" value="AAI38775.1"/>
    <property type="molecule type" value="mRNA"/>
</dbReference>
<dbReference type="EMBL" id="BC138776">
    <property type="protein sequence ID" value="AAI38777.1"/>
    <property type="molecule type" value="mRNA"/>
</dbReference>
<dbReference type="CCDS" id="CCDS27968.1"/>
<dbReference type="RefSeq" id="NP_001034610.1">
    <property type="nucleotide sequence ID" value="NM_001039521.1"/>
</dbReference>
<dbReference type="SMR" id="B2RS91"/>
<dbReference type="BioGRID" id="223022">
    <property type="interactions" value="3"/>
</dbReference>
<dbReference type="CORUM" id="B2RS91"/>
<dbReference type="FunCoup" id="B2RS91">
    <property type="interactions" value="3090"/>
</dbReference>
<dbReference type="STRING" id="10090.ENSMUSP00000023363"/>
<dbReference type="iPTMnet" id="B2RS91"/>
<dbReference type="PhosphoSitePlus" id="B2RS91"/>
<dbReference type="jPOST" id="B2RS91"/>
<dbReference type="PaxDb" id="10090-ENSMUSP00000023363"/>
<dbReference type="PeptideAtlas" id="B2RS91"/>
<dbReference type="ProteomicsDB" id="299815"/>
<dbReference type="Pumba" id="B2RS91"/>
<dbReference type="Antibodypedia" id="11691">
    <property type="antibodies" value="228 antibodies from 31 providers"/>
</dbReference>
<dbReference type="DNASU" id="106298"/>
<dbReference type="Ensembl" id="ENSMUST00000023363.8">
    <property type="protein sequence ID" value="ENSMUSP00000023363.7"/>
    <property type="gene ID" value="ENSMUSG00000022682.9"/>
</dbReference>
<dbReference type="GeneID" id="106298"/>
<dbReference type="KEGG" id="mmu:106298"/>
<dbReference type="UCSC" id="uc007ygj.1">
    <property type="organism name" value="mouse"/>
</dbReference>
<dbReference type="AGR" id="MGI:1925255"/>
<dbReference type="CTD" id="54700"/>
<dbReference type="MGI" id="MGI:1925255">
    <property type="gene designation" value="Rrn3"/>
</dbReference>
<dbReference type="VEuPathDB" id="HostDB:ENSMUSG00000022682"/>
<dbReference type="eggNOG" id="KOG2434">
    <property type="taxonomic scope" value="Eukaryota"/>
</dbReference>
<dbReference type="GeneTree" id="ENSGT00390000001488"/>
<dbReference type="HOGENOM" id="CLU_010579_3_1_1"/>
<dbReference type="InParanoid" id="B2RS91"/>
<dbReference type="OMA" id="VCSPAIV"/>
<dbReference type="OrthoDB" id="26970at2759"/>
<dbReference type="PhylomeDB" id="B2RS91"/>
<dbReference type="TreeFam" id="TF312979"/>
<dbReference type="Reactome" id="R-MMU-73762">
    <property type="pathway name" value="RNA Polymerase I Transcription Initiation"/>
</dbReference>
<dbReference type="Reactome" id="R-MMU-73772">
    <property type="pathway name" value="RNA Polymerase I Promoter Escape"/>
</dbReference>
<dbReference type="BioGRID-ORCS" id="106298">
    <property type="hits" value="24 hits in 76 CRISPR screens"/>
</dbReference>
<dbReference type="ChiTaRS" id="Rrn3">
    <property type="organism name" value="mouse"/>
</dbReference>
<dbReference type="PRO" id="PR:B2RS91"/>
<dbReference type="Proteomes" id="UP000000589">
    <property type="component" value="Chromosome 16"/>
</dbReference>
<dbReference type="RNAct" id="B2RS91">
    <property type="molecule type" value="protein"/>
</dbReference>
<dbReference type="Bgee" id="ENSMUSG00000022682">
    <property type="expression patterns" value="Expressed in cleaving embryo and 265 other cell types or tissues"/>
</dbReference>
<dbReference type="GO" id="GO:0005730">
    <property type="term" value="C:nucleolus"/>
    <property type="evidence" value="ECO:0007669"/>
    <property type="project" value="UniProtKB-SubCell"/>
</dbReference>
<dbReference type="GO" id="GO:0070063">
    <property type="term" value="F:RNA polymerase binding"/>
    <property type="evidence" value="ECO:0000314"/>
    <property type="project" value="MGI"/>
</dbReference>
<dbReference type="GO" id="GO:0001164">
    <property type="term" value="F:RNA polymerase I core promoter sequence-specific DNA binding"/>
    <property type="evidence" value="ECO:0007669"/>
    <property type="project" value="Ensembl"/>
</dbReference>
<dbReference type="GO" id="GO:0001181">
    <property type="term" value="F:RNA polymerase I general transcription initiation factor activity"/>
    <property type="evidence" value="ECO:0000250"/>
    <property type="project" value="UniProtKB"/>
</dbReference>
<dbReference type="GO" id="GO:0007028">
    <property type="term" value="P:cytoplasm organization"/>
    <property type="evidence" value="ECO:0000315"/>
    <property type="project" value="MGI"/>
</dbReference>
<dbReference type="GO" id="GO:0006352">
    <property type="term" value="P:DNA-templated transcription initiation"/>
    <property type="evidence" value="ECO:0000314"/>
    <property type="project" value="MGI"/>
</dbReference>
<dbReference type="GO" id="GO:0048144">
    <property type="term" value="P:fibroblast proliferation"/>
    <property type="evidence" value="ECO:0000315"/>
    <property type="project" value="MGI"/>
</dbReference>
<dbReference type="GO" id="GO:0048872">
    <property type="term" value="P:homeostasis of number of cells"/>
    <property type="evidence" value="ECO:0000315"/>
    <property type="project" value="MGI"/>
</dbReference>
<dbReference type="GO" id="GO:0001701">
    <property type="term" value="P:in utero embryonic development"/>
    <property type="evidence" value="ECO:0000315"/>
    <property type="project" value="MGI"/>
</dbReference>
<dbReference type="GO" id="GO:0072332">
    <property type="term" value="P:intrinsic apoptotic signaling pathway by p53 class mediator"/>
    <property type="evidence" value="ECO:0000315"/>
    <property type="project" value="MGI"/>
</dbReference>
<dbReference type="GO" id="GO:1902254">
    <property type="term" value="P:negative regulation of intrinsic apoptotic signaling pathway by p53 class mediator"/>
    <property type="evidence" value="ECO:0000315"/>
    <property type="project" value="MGI"/>
</dbReference>
<dbReference type="GO" id="GO:0007000">
    <property type="term" value="P:nucleolus organization"/>
    <property type="evidence" value="ECO:0000315"/>
    <property type="project" value="MGI"/>
</dbReference>
<dbReference type="GO" id="GO:0045893">
    <property type="term" value="P:positive regulation of DNA-templated transcription"/>
    <property type="evidence" value="ECO:0000314"/>
    <property type="project" value="MGI"/>
</dbReference>
<dbReference type="GO" id="GO:0010976">
    <property type="term" value="P:positive regulation of neuron projection development"/>
    <property type="evidence" value="ECO:0007669"/>
    <property type="project" value="Ensembl"/>
</dbReference>
<dbReference type="GO" id="GO:2000142">
    <property type="term" value="P:regulation of DNA-templated transcription initiation"/>
    <property type="evidence" value="ECO:0000314"/>
    <property type="project" value="MGI"/>
</dbReference>
<dbReference type="GO" id="GO:0042254">
    <property type="term" value="P:ribosome biogenesis"/>
    <property type="evidence" value="ECO:0000315"/>
    <property type="project" value="MGI"/>
</dbReference>
<dbReference type="GO" id="GO:0006361">
    <property type="term" value="P:transcription initiation at RNA polymerase I promoter"/>
    <property type="evidence" value="ECO:0000315"/>
    <property type="project" value="MGI"/>
</dbReference>
<dbReference type="InterPro" id="IPR016024">
    <property type="entry name" value="ARM-type_fold"/>
</dbReference>
<dbReference type="InterPro" id="IPR007991">
    <property type="entry name" value="RNA_pol_I_trans_ini_fac_RRN3"/>
</dbReference>
<dbReference type="PANTHER" id="PTHR12790:SF0">
    <property type="entry name" value="RNA POLYMERASE I-SPECIFIC TRANSCRIPTION INITIATION FACTOR RRN3-RELATED"/>
    <property type="match status" value="1"/>
</dbReference>
<dbReference type="PANTHER" id="PTHR12790">
    <property type="entry name" value="TRANSCRIPTION INITIATION FACTOR IA RRN3"/>
    <property type="match status" value="1"/>
</dbReference>
<dbReference type="Pfam" id="PF05327">
    <property type="entry name" value="RRN3"/>
    <property type="match status" value="1"/>
</dbReference>
<dbReference type="SUPFAM" id="SSF48371">
    <property type="entry name" value="ARM repeat"/>
    <property type="match status" value="1"/>
</dbReference>
<sequence length="656" mass="74518">MAAPLLHTRLSGDVTAAASATLSASRTGLSDMLALESDFFNSPPKKTVRFGGTVTEVLLKYKKGETNDLELLKNQLSDPDIKDDQIINWLLEFRSSVMYLTKDFEQLINIILRLPWLNRSQRVVEEYLAFLGNLVSAQTVFLRPCLSMIASHFVPPRVIVKEGGIDVSDSDDEDDNLPAIFDTCHRALQIITRYVPSTPWFLMPILVEKFPFVRKSERTLECYVHNLLRISLYFPTLRREILELVIEKLLKLDVSVSRQDIEDAEEKAAQTCGGTDTTEGLFNMDEDEDTDPEKKADQEQPNQMAHPTAERLDVLLCLLLSYIEDVCRVHGKIDNNKTKDLYRDLISIFDKLLLPTHASCHVQFFMFFLCSFKLGFAEAFLEHLWKKLQDPNNPAIIRQAAANYIGSFLARAKFIPLITVKTCLDLLVNWLHMYLTNQDSGTKAFCDVALHGPFYSACQAVFYTVVFRHKQLLSGNLKQGLQYLQSLNFERIVLSQLNPLKICLPQVVNFFAAITNKYQLVFCYTIMERNSRQMLPVIRSTAGGDSVQTCTNPLDTFFPFDPCVLKRSKKFIDPIYQIWEDGSAEELQEFKKSTKKEVVEDEDDDFLKGEVPQSDTVTGLTPSSFDTHFQSPSSSVGSPPVLYIPGQSPLLTRIYD</sequence>
<gene>
    <name type="primary">Rrn3</name>
</gene>
<organism>
    <name type="scientific">Mus musculus</name>
    <name type="common">Mouse</name>
    <dbReference type="NCBI Taxonomy" id="10090"/>
    <lineage>
        <taxon>Eukaryota</taxon>
        <taxon>Metazoa</taxon>
        <taxon>Chordata</taxon>
        <taxon>Craniata</taxon>
        <taxon>Vertebrata</taxon>
        <taxon>Euteleostomi</taxon>
        <taxon>Mammalia</taxon>
        <taxon>Eutheria</taxon>
        <taxon>Euarchontoglires</taxon>
        <taxon>Glires</taxon>
        <taxon>Rodentia</taxon>
        <taxon>Myomorpha</taxon>
        <taxon>Muroidea</taxon>
        <taxon>Muridae</taxon>
        <taxon>Murinae</taxon>
        <taxon>Mus</taxon>
        <taxon>Mus</taxon>
    </lineage>
</organism>
<accession>B2RS91</accession>
<accession>Q7TNE7</accession>
<accession>Q8K052</accession>
<reference key="1">
    <citation type="journal article" date="2004" name="Genome Res.">
        <title>The status, quality, and expansion of the NIH full-length cDNA project: the Mammalian Gene Collection (MGC).</title>
        <authorList>
            <consortium name="The MGC Project Team"/>
        </authorList>
    </citation>
    <scope>NUCLEOTIDE SEQUENCE [LARGE SCALE MRNA]</scope>
    <source>
        <strain>C57BL/6J</strain>
        <tissue>Brain</tissue>
        <tissue>Eye</tissue>
        <tissue>Lung</tissue>
    </source>
</reference>
<reference key="2">
    <citation type="journal article" date="2002" name="J. Biol. Chem.">
        <title>Rrn3 phosphorylation is a regulatory checkpoint for ribosome biogenesis.</title>
        <authorList>
            <person name="Cavanaugh A.H."/>
            <person name="Hirschler-Laszkiewicz I."/>
            <person name="Hu Q."/>
            <person name="Dundr M."/>
            <person name="Smink T."/>
            <person name="Misteli T."/>
            <person name="Rothblum L.I."/>
        </authorList>
    </citation>
    <scope>FUNCTION</scope>
    <scope>SUBCELLULAR LOCATION</scope>
    <scope>PHOSPHORYLATION</scope>
    <scope>INTERACTION WITH TAF1B</scope>
</reference>
<reference key="3">
    <citation type="journal article" date="2003" name="J. Biol. Chem.">
        <title>Rrn3 becomes inactivated in the process of ribosomal DNA transcription.</title>
        <authorList>
            <person name="Hirschler-Laszkiewicz I."/>
            <person name="Cavanaugh A.H."/>
            <person name="Mirza A."/>
            <person name="Lun M."/>
            <person name="Hu Q."/>
            <person name="Smink T."/>
            <person name="Rothblum L.I."/>
        </authorList>
    </citation>
    <scope>FUNCTION</scope>
</reference>
<reference key="4">
    <citation type="journal article" date="2010" name="Cell">
        <title>A tissue-specific atlas of mouse protein phosphorylation and expression.</title>
        <authorList>
            <person name="Huttlin E.L."/>
            <person name="Jedrychowski M.P."/>
            <person name="Elias J.E."/>
            <person name="Goswami T."/>
            <person name="Rad R."/>
            <person name="Beausoleil S.A."/>
            <person name="Villen J."/>
            <person name="Haas W."/>
            <person name="Sowa M.E."/>
            <person name="Gygi S.P."/>
        </authorList>
    </citation>
    <scope>PHOSPHORYLATION [LARGE SCALE ANALYSIS] AT SER-168 AND SER-170</scope>
    <scope>IDENTIFICATION BY MASS SPECTROMETRY [LARGE SCALE ANALYSIS]</scope>
    <source>
        <tissue>Brain</tissue>
        <tissue>Kidney</tissue>
        <tissue>Lung</tissue>
        <tissue>Spleen</tissue>
        <tissue>Testis</tissue>
    </source>
</reference>
<evidence type="ECO:0000250" key="1"/>
<evidence type="ECO:0000250" key="2">
    <source>
        <dbReference type="UniProtKB" id="Q9NYV6"/>
    </source>
</evidence>
<evidence type="ECO:0000256" key="3">
    <source>
        <dbReference type="SAM" id="MobiDB-lite"/>
    </source>
</evidence>
<evidence type="ECO:0000269" key="4">
    <source>
    </source>
</evidence>
<evidence type="ECO:0000269" key="5">
    <source>
    </source>
</evidence>
<evidence type="ECO:0000305" key="6"/>
<evidence type="ECO:0007744" key="7">
    <source>
    </source>
</evidence>
<feature type="chain" id="PRO_0000384905" description="RNA polymerase I-specific transcription initiation factor RRN3">
    <location>
        <begin position="1"/>
        <end position="656"/>
    </location>
</feature>
<feature type="region of interest" description="Disordered" evidence="3">
    <location>
        <begin position="265"/>
        <end position="304"/>
    </location>
</feature>
<feature type="region of interest" description="Interaction with POLR1F" evidence="1">
    <location>
        <begin position="498"/>
        <end position="650"/>
    </location>
</feature>
<feature type="region of interest" description="Interaction with EIF3L" evidence="1">
    <location>
        <begin position="555"/>
        <end position="650"/>
    </location>
</feature>
<feature type="region of interest" description="Disordered" evidence="3">
    <location>
        <begin position="608"/>
        <end position="641"/>
    </location>
</feature>
<feature type="compositionally biased region" description="Polar residues" evidence="3">
    <location>
        <begin position="613"/>
        <end position="630"/>
    </location>
</feature>
<feature type="compositionally biased region" description="Low complexity" evidence="3">
    <location>
        <begin position="631"/>
        <end position="641"/>
    </location>
</feature>
<feature type="modified residue" description="Phosphoserine" evidence="7">
    <location>
        <position position="168"/>
    </location>
</feature>
<feature type="modified residue" description="Phosphoserine" evidence="7">
    <location>
        <position position="170"/>
    </location>
</feature>
<feature type="modified residue" description="Phosphothreonine; by MAPK9" evidence="2">
    <location>
        <position position="198"/>
    </location>
</feature>
<feature type="modified residue" description="Phosphoserine" evidence="2">
    <location>
        <position position="638"/>
    </location>
</feature>
<feature type="sequence conflict" description="In Ref. 1; AAH55781." evidence="6" ref="1">
    <original>E</original>
    <variation>Q</variation>
    <location>
        <position position="597"/>
    </location>
</feature>
<comment type="function">
    <text evidence="4 5">Required for efficient transcription initiation by RNA polymerase I. Required for the formation of the competent pre-initiation complex (PIC).</text>
</comment>
<comment type="subunit">
    <text evidence="2">Part of Pol I pre-initiation complex (PIC), in which Pol I core assembles with RRN3 and promoter-bound UTBF and SL1/TIF-IB complex. Interacts with POLR1F, EIF3L, TAF1B and TAF1C.</text>
</comment>
<comment type="subcellular location">
    <subcellularLocation>
        <location evidence="4">Nucleus</location>
        <location evidence="4">Nucleolus</location>
    </subcellularLocation>
</comment>
<comment type="PTM">
    <text evidence="1">Phosphorylated at Thr-198 by MAPK9/JNK2, which abrogates initiation complex formation.</text>
</comment>
<comment type="similarity">
    <text evidence="6">Belongs to the RRN3 family.</text>
</comment>
<name>RRN3_MOUSE</name>
<proteinExistence type="evidence at protein level"/>